<comment type="function">
    <text evidence="1">PPIases accelerate the folding of proteins. It catalyzes the cis-trans isomerization of proline imidic peptide bonds in oligopeptides (By similarity).</text>
</comment>
<comment type="catalytic activity">
    <reaction>
        <text>[protein]-peptidylproline (omega=180) = [protein]-peptidylproline (omega=0)</text>
        <dbReference type="Rhea" id="RHEA:16237"/>
        <dbReference type="Rhea" id="RHEA-COMP:10747"/>
        <dbReference type="Rhea" id="RHEA-COMP:10748"/>
        <dbReference type="ChEBI" id="CHEBI:83833"/>
        <dbReference type="ChEBI" id="CHEBI:83834"/>
        <dbReference type="EC" id="5.2.1.8"/>
    </reaction>
</comment>
<comment type="activity regulation">
    <text evidence="1">Inhibited by both FK506 and rapamycin.</text>
</comment>
<comment type="subcellular location">
    <subcellularLocation>
        <location evidence="1">Cytoplasm</location>
    </subcellularLocation>
</comment>
<comment type="similarity">
    <text evidence="3">Belongs to the FKBP-type PPIase family. FKBP1 subfamily.</text>
</comment>
<sequence length="114" mass="12287">MSEVIEGNVKIDRLSPGDGKTFPKTGDLVTIHYTGTLENEQKFDSSVDRGSPFQCNIGVGQVIKGWDVAIPKLSVGEKARLTIPGAYAYGPRGFPGLIPPNATLIFEVELLKVN</sequence>
<keyword id="KW-0963">Cytoplasm</keyword>
<keyword id="KW-0413">Isomerase</keyword>
<keyword id="KW-1185">Reference proteome</keyword>
<keyword id="KW-0697">Rotamase</keyword>
<reference key="1">
    <citation type="journal article" date="2004" name="Science">
        <title>The Ashbya gossypii genome as a tool for mapping the ancient Saccharomyces cerevisiae genome.</title>
        <authorList>
            <person name="Dietrich F.S."/>
            <person name="Voegeli S."/>
            <person name="Brachat S."/>
            <person name="Lerch A."/>
            <person name="Gates K."/>
            <person name="Steiner S."/>
            <person name="Mohr C."/>
            <person name="Poehlmann R."/>
            <person name="Luedi P."/>
            <person name="Choi S."/>
            <person name="Wing R.A."/>
            <person name="Flavier A."/>
            <person name="Gaffney T.D."/>
            <person name="Philippsen P."/>
        </authorList>
    </citation>
    <scope>NUCLEOTIDE SEQUENCE [LARGE SCALE GENOMIC DNA]</scope>
    <source>
        <strain>ATCC 10895 / CBS 109.51 / FGSC 9923 / NRRL Y-1056</strain>
    </source>
</reference>
<reference key="2">
    <citation type="journal article" date="2013" name="G3 (Bethesda)">
        <title>Genomes of Ashbya fungi isolated from insects reveal four mating-type loci, numerous translocations, lack of transposons, and distinct gene duplications.</title>
        <authorList>
            <person name="Dietrich F.S."/>
            <person name="Voegeli S."/>
            <person name="Kuo S."/>
            <person name="Philippsen P."/>
        </authorList>
    </citation>
    <scope>GENOME REANNOTATION</scope>
    <source>
        <strain>ATCC 10895 / CBS 109.51 / FGSC 9923 / NRRL Y-1056</strain>
    </source>
</reference>
<name>FKBP_EREGS</name>
<protein>
    <recommendedName>
        <fullName>FK506-binding protein 1</fullName>
        <shortName>FKBP</shortName>
        <ecNumber>5.2.1.8</ecNumber>
    </recommendedName>
    <alternativeName>
        <fullName>Peptidyl-prolyl cis-trans isomerase</fullName>
        <shortName>PPIase</shortName>
    </alternativeName>
    <alternativeName>
        <fullName>Rapamycin-binding protein</fullName>
    </alternativeName>
</protein>
<dbReference type="EC" id="5.2.1.8"/>
<dbReference type="EMBL" id="AE016819">
    <property type="protein sequence ID" value="AAS53435.1"/>
    <property type="molecule type" value="Genomic_DNA"/>
</dbReference>
<dbReference type="RefSeq" id="NP_985611.1">
    <property type="nucleotide sequence ID" value="NM_210965.1"/>
</dbReference>
<dbReference type="SMR" id="Q754K8"/>
<dbReference type="FunCoup" id="Q754K8">
    <property type="interactions" value="404"/>
</dbReference>
<dbReference type="STRING" id="284811.Q754K8"/>
<dbReference type="EnsemblFungi" id="AAS53435">
    <property type="protein sequence ID" value="AAS53435"/>
    <property type="gene ID" value="AGOS_AFR064C"/>
</dbReference>
<dbReference type="GeneID" id="4621852"/>
<dbReference type="KEGG" id="ago:AGOS_AFR064C"/>
<dbReference type="eggNOG" id="KOG0544">
    <property type="taxonomic scope" value="Eukaryota"/>
</dbReference>
<dbReference type="HOGENOM" id="CLU_013615_12_1_1"/>
<dbReference type="InParanoid" id="Q754K8"/>
<dbReference type="OMA" id="EQFDASW"/>
<dbReference type="OrthoDB" id="1902587at2759"/>
<dbReference type="Proteomes" id="UP000000591">
    <property type="component" value="Chromosome VI"/>
</dbReference>
<dbReference type="GO" id="GO:0005737">
    <property type="term" value="C:cytoplasm"/>
    <property type="evidence" value="ECO:0000318"/>
    <property type="project" value="GO_Central"/>
</dbReference>
<dbReference type="GO" id="GO:0001228">
    <property type="term" value="F:DNA-binding transcription activator activity, RNA polymerase II-specific"/>
    <property type="evidence" value="ECO:0007669"/>
    <property type="project" value="EnsemblFungi"/>
</dbReference>
<dbReference type="GO" id="GO:0005527">
    <property type="term" value="F:macrolide binding"/>
    <property type="evidence" value="ECO:0007669"/>
    <property type="project" value="EnsemblFungi"/>
</dbReference>
<dbReference type="GO" id="GO:0003755">
    <property type="term" value="F:peptidyl-prolyl cis-trans isomerase activity"/>
    <property type="evidence" value="ECO:0000318"/>
    <property type="project" value="GO_Central"/>
</dbReference>
<dbReference type="GO" id="GO:0044183">
    <property type="term" value="F:protein folding chaperone"/>
    <property type="evidence" value="ECO:0007669"/>
    <property type="project" value="EnsemblFungi"/>
</dbReference>
<dbReference type="GO" id="GO:0006325">
    <property type="term" value="P:chromatin organization"/>
    <property type="evidence" value="ECO:0007669"/>
    <property type="project" value="EnsemblFungi"/>
</dbReference>
<dbReference type="GO" id="GO:1901711">
    <property type="term" value="P:negative regulation of homoserine biosynthetic process"/>
    <property type="evidence" value="ECO:0007669"/>
    <property type="project" value="EnsemblFungi"/>
</dbReference>
<dbReference type="GO" id="GO:0070651">
    <property type="term" value="P:nonfunctional rRNA decay"/>
    <property type="evidence" value="ECO:0007669"/>
    <property type="project" value="EnsemblFungi"/>
</dbReference>
<dbReference type="GO" id="GO:1903644">
    <property type="term" value="P:regulation of chaperone-mediated protein folding"/>
    <property type="evidence" value="ECO:0007669"/>
    <property type="project" value="EnsemblFungi"/>
</dbReference>
<dbReference type="GO" id="GO:0006366">
    <property type="term" value="P:transcription by RNA polymerase II"/>
    <property type="evidence" value="ECO:0007669"/>
    <property type="project" value="EnsemblFungi"/>
</dbReference>
<dbReference type="FunFam" id="3.10.50.40:FF:000025">
    <property type="entry name" value="Peptidylprolyl isomerase"/>
    <property type="match status" value="1"/>
</dbReference>
<dbReference type="Gene3D" id="3.10.50.40">
    <property type="match status" value="1"/>
</dbReference>
<dbReference type="InterPro" id="IPR050689">
    <property type="entry name" value="FKBP-type_PPIase"/>
</dbReference>
<dbReference type="InterPro" id="IPR046357">
    <property type="entry name" value="PPIase_dom_sf"/>
</dbReference>
<dbReference type="InterPro" id="IPR001179">
    <property type="entry name" value="PPIase_FKBP_dom"/>
</dbReference>
<dbReference type="PANTHER" id="PTHR10516:SF443">
    <property type="entry name" value="FK506-BINDING PROTEIN 59-RELATED"/>
    <property type="match status" value="1"/>
</dbReference>
<dbReference type="PANTHER" id="PTHR10516">
    <property type="entry name" value="PEPTIDYL-PROLYL CIS-TRANS ISOMERASE"/>
    <property type="match status" value="1"/>
</dbReference>
<dbReference type="Pfam" id="PF00254">
    <property type="entry name" value="FKBP_C"/>
    <property type="match status" value="1"/>
</dbReference>
<dbReference type="SUPFAM" id="SSF54534">
    <property type="entry name" value="FKBP-like"/>
    <property type="match status" value="1"/>
</dbReference>
<dbReference type="PROSITE" id="PS50059">
    <property type="entry name" value="FKBP_PPIASE"/>
    <property type="match status" value="1"/>
</dbReference>
<feature type="chain" id="PRO_0000233317" description="FK506-binding protein 1">
    <location>
        <begin position="1"/>
        <end position="114"/>
    </location>
</feature>
<feature type="domain" description="PPIase FKBP-type" evidence="2">
    <location>
        <begin position="26"/>
        <end position="114"/>
    </location>
</feature>
<gene>
    <name type="primary">FPR1</name>
    <name type="ordered locus">AFR064C</name>
</gene>
<proteinExistence type="inferred from homology"/>
<accession>Q754K8</accession>
<organism>
    <name type="scientific">Eremothecium gossypii (strain ATCC 10895 / CBS 109.51 / FGSC 9923 / NRRL Y-1056)</name>
    <name type="common">Yeast</name>
    <name type="synonym">Ashbya gossypii</name>
    <dbReference type="NCBI Taxonomy" id="284811"/>
    <lineage>
        <taxon>Eukaryota</taxon>
        <taxon>Fungi</taxon>
        <taxon>Dikarya</taxon>
        <taxon>Ascomycota</taxon>
        <taxon>Saccharomycotina</taxon>
        <taxon>Saccharomycetes</taxon>
        <taxon>Saccharomycetales</taxon>
        <taxon>Saccharomycetaceae</taxon>
        <taxon>Eremothecium</taxon>
    </lineage>
</organism>
<evidence type="ECO:0000250" key="1"/>
<evidence type="ECO:0000255" key="2">
    <source>
        <dbReference type="PROSITE-ProRule" id="PRU00277"/>
    </source>
</evidence>
<evidence type="ECO:0000305" key="3"/>